<evidence type="ECO:0000255" key="1">
    <source>
        <dbReference type="HAMAP-Rule" id="MF_00558"/>
    </source>
</evidence>
<reference key="1">
    <citation type="journal article" date="2009" name="Environ. Microbiol.">
        <title>The genome of Polaromonas naphthalenivorans strain CJ2, isolated from coal tar-contaminated sediment, reveals physiological and metabolic versatility and evolution through extensive horizontal gene transfer.</title>
        <authorList>
            <person name="Yagi J.M."/>
            <person name="Sims D."/>
            <person name="Brettin T."/>
            <person name="Bruce D."/>
            <person name="Madsen E.L."/>
        </authorList>
    </citation>
    <scope>NUCLEOTIDE SEQUENCE [LARGE SCALE GENOMIC DNA]</scope>
    <source>
        <strain>CJ2</strain>
    </source>
</reference>
<feature type="chain" id="PRO_1000082158" description="Succinate--CoA ligase [ADP-forming] subunit beta">
    <location>
        <begin position="1"/>
        <end position="386"/>
    </location>
</feature>
<feature type="domain" description="ATP-grasp" evidence="1">
    <location>
        <begin position="9"/>
        <end position="244"/>
    </location>
</feature>
<feature type="binding site" evidence="1">
    <location>
        <position position="46"/>
    </location>
    <ligand>
        <name>ATP</name>
        <dbReference type="ChEBI" id="CHEBI:30616"/>
    </ligand>
</feature>
<feature type="binding site" evidence="1">
    <location>
        <begin position="53"/>
        <end position="55"/>
    </location>
    <ligand>
        <name>ATP</name>
        <dbReference type="ChEBI" id="CHEBI:30616"/>
    </ligand>
</feature>
<feature type="binding site" evidence="1">
    <location>
        <position position="99"/>
    </location>
    <ligand>
        <name>ATP</name>
        <dbReference type="ChEBI" id="CHEBI:30616"/>
    </ligand>
</feature>
<feature type="binding site" evidence="1">
    <location>
        <position position="102"/>
    </location>
    <ligand>
        <name>ATP</name>
        <dbReference type="ChEBI" id="CHEBI:30616"/>
    </ligand>
</feature>
<feature type="binding site" evidence="1">
    <location>
        <position position="107"/>
    </location>
    <ligand>
        <name>ATP</name>
        <dbReference type="ChEBI" id="CHEBI:30616"/>
    </ligand>
</feature>
<feature type="binding site" evidence="1">
    <location>
        <position position="199"/>
    </location>
    <ligand>
        <name>Mg(2+)</name>
        <dbReference type="ChEBI" id="CHEBI:18420"/>
    </ligand>
</feature>
<feature type="binding site" evidence="1">
    <location>
        <position position="213"/>
    </location>
    <ligand>
        <name>Mg(2+)</name>
        <dbReference type="ChEBI" id="CHEBI:18420"/>
    </ligand>
</feature>
<feature type="binding site" evidence="1">
    <location>
        <position position="264"/>
    </location>
    <ligand>
        <name>substrate</name>
        <note>ligand shared with subunit alpha</note>
    </ligand>
</feature>
<feature type="binding site" evidence="1">
    <location>
        <begin position="321"/>
        <end position="323"/>
    </location>
    <ligand>
        <name>substrate</name>
        <note>ligand shared with subunit alpha</note>
    </ligand>
</feature>
<comment type="function">
    <text evidence="1">Succinyl-CoA synthetase functions in the citric acid cycle (TCA), coupling the hydrolysis of succinyl-CoA to the synthesis of either ATP or GTP and thus represents the only step of substrate-level phosphorylation in the TCA. The beta subunit provides nucleotide specificity of the enzyme and binds the substrate succinate, while the binding sites for coenzyme A and phosphate are found in the alpha subunit.</text>
</comment>
<comment type="catalytic activity">
    <reaction evidence="1">
        <text>succinate + ATP + CoA = succinyl-CoA + ADP + phosphate</text>
        <dbReference type="Rhea" id="RHEA:17661"/>
        <dbReference type="ChEBI" id="CHEBI:30031"/>
        <dbReference type="ChEBI" id="CHEBI:30616"/>
        <dbReference type="ChEBI" id="CHEBI:43474"/>
        <dbReference type="ChEBI" id="CHEBI:57287"/>
        <dbReference type="ChEBI" id="CHEBI:57292"/>
        <dbReference type="ChEBI" id="CHEBI:456216"/>
        <dbReference type="EC" id="6.2.1.5"/>
    </reaction>
    <physiologicalReaction direction="right-to-left" evidence="1">
        <dbReference type="Rhea" id="RHEA:17663"/>
    </physiologicalReaction>
</comment>
<comment type="catalytic activity">
    <reaction evidence="1">
        <text>GTP + succinate + CoA = succinyl-CoA + GDP + phosphate</text>
        <dbReference type="Rhea" id="RHEA:22120"/>
        <dbReference type="ChEBI" id="CHEBI:30031"/>
        <dbReference type="ChEBI" id="CHEBI:37565"/>
        <dbReference type="ChEBI" id="CHEBI:43474"/>
        <dbReference type="ChEBI" id="CHEBI:57287"/>
        <dbReference type="ChEBI" id="CHEBI:57292"/>
        <dbReference type="ChEBI" id="CHEBI:58189"/>
    </reaction>
    <physiologicalReaction direction="right-to-left" evidence="1">
        <dbReference type="Rhea" id="RHEA:22122"/>
    </physiologicalReaction>
</comment>
<comment type="cofactor">
    <cofactor evidence="1">
        <name>Mg(2+)</name>
        <dbReference type="ChEBI" id="CHEBI:18420"/>
    </cofactor>
    <text evidence="1">Binds 1 Mg(2+) ion per subunit.</text>
</comment>
<comment type="pathway">
    <text evidence="1">Carbohydrate metabolism; tricarboxylic acid cycle; succinate from succinyl-CoA (ligase route): step 1/1.</text>
</comment>
<comment type="subunit">
    <text evidence="1">Heterotetramer of two alpha and two beta subunits.</text>
</comment>
<comment type="similarity">
    <text evidence="1">Belongs to the succinate/malate CoA ligase beta subunit family.</text>
</comment>
<protein>
    <recommendedName>
        <fullName evidence="1">Succinate--CoA ligase [ADP-forming] subunit beta</fullName>
        <ecNumber evidence="1">6.2.1.5</ecNumber>
    </recommendedName>
    <alternativeName>
        <fullName evidence="1">Succinyl-CoA synthetase subunit beta</fullName>
        <shortName evidence="1">SCS-beta</shortName>
    </alternativeName>
</protein>
<accession>A1VUC0</accession>
<sequence>MKIHEYQGKEILRNFGVPVPRGIPAFTVQEAVEAAQKLGGPVWVVKAQIHAGGRGKGGGVKVAKTIEDVKRIAGEILGMQLKTHQTGPEGQKVRRLYIEDGADIQKEYYVSLVTDRATQKVAFIASSEGGMDIEEVAHSTPEKIITEFIDPLTGLGEEQAVKIANGIGLPPESTAQAVDIFQKLYKCYMDTDASLVEINPLNRDSKNALMALDAKFNFDPNALFRHADIVAYRDLDEEDPAEVEASKFDLAYISLDGNIGCLVNGAGLAMATMDTIKLFGGEPANFLDVGGGATAEKVTEAFKIMLKNPDVKGILVNIFGGIMKCDTIADGVIAACKAVNLSVPLVVRMKGTNEDLGKKMLAESGLPIIAADTMAEAATKIVAAVK</sequence>
<organism>
    <name type="scientific">Polaromonas naphthalenivorans (strain CJ2)</name>
    <dbReference type="NCBI Taxonomy" id="365044"/>
    <lineage>
        <taxon>Bacteria</taxon>
        <taxon>Pseudomonadati</taxon>
        <taxon>Pseudomonadota</taxon>
        <taxon>Betaproteobacteria</taxon>
        <taxon>Burkholderiales</taxon>
        <taxon>Comamonadaceae</taxon>
        <taxon>Polaromonas</taxon>
    </lineage>
</organism>
<proteinExistence type="inferred from homology"/>
<gene>
    <name evidence="1" type="primary">sucC</name>
    <name type="ordered locus">Pnap_3953</name>
</gene>
<keyword id="KW-0067">ATP-binding</keyword>
<keyword id="KW-0436">Ligase</keyword>
<keyword id="KW-0460">Magnesium</keyword>
<keyword id="KW-0479">Metal-binding</keyword>
<keyword id="KW-0547">Nucleotide-binding</keyword>
<keyword id="KW-1185">Reference proteome</keyword>
<keyword id="KW-0816">Tricarboxylic acid cycle</keyword>
<name>SUCC_POLNA</name>
<dbReference type="EC" id="6.2.1.5" evidence="1"/>
<dbReference type="EMBL" id="CP000529">
    <property type="protein sequence ID" value="ABM39248.1"/>
    <property type="molecule type" value="Genomic_DNA"/>
</dbReference>
<dbReference type="RefSeq" id="WP_011803314.1">
    <property type="nucleotide sequence ID" value="NC_008781.1"/>
</dbReference>
<dbReference type="SMR" id="A1VUC0"/>
<dbReference type="STRING" id="365044.Pnap_3953"/>
<dbReference type="KEGG" id="pna:Pnap_3953"/>
<dbReference type="eggNOG" id="COG0045">
    <property type="taxonomic scope" value="Bacteria"/>
</dbReference>
<dbReference type="HOGENOM" id="CLU_037430_0_2_4"/>
<dbReference type="OrthoDB" id="9802602at2"/>
<dbReference type="UniPathway" id="UPA00223">
    <property type="reaction ID" value="UER00999"/>
</dbReference>
<dbReference type="Proteomes" id="UP000000644">
    <property type="component" value="Chromosome"/>
</dbReference>
<dbReference type="GO" id="GO:0005829">
    <property type="term" value="C:cytosol"/>
    <property type="evidence" value="ECO:0007669"/>
    <property type="project" value="TreeGrafter"/>
</dbReference>
<dbReference type="GO" id="GO:0042709">
    <property type="term" value="C:succinate-CoA ligase complex"/>
    <property type="evidence" value="ECO:0007669"/>
    <property type="project" value="TreeGrafter"/>
</dbReference>
<dbReference type="GO" id="GO:0005524">
    <property type="term" value="F:ATP binding"/>
    <property type="evidence" value="ECO:0007669"/>
    <property type="project" value="UniProtKB-UniRule"/>
</dbReference>
<dbReference type="GO" id="GO:0000287">
    <property type="term" value="F:magnesium ion binding"/>
    <property type="evidence" value="ECO:0007669"/>
    <property type="project" value="UniProtKB-UniRule"/>
</dbReference>
<dbReference type="GO" id="GO:0004775">
    <property type="term" value="F:succinate-CoA ligase (ADP-forming) activity"/>
    <property type="evidence" value="ECO:0007669"/>
    <property type="project" value="UniProtKB-UniRule"/>
</dbReference>
<dbReference type="GO" id="GO:0004776">
    <property type="term" value="F:succinate-CoA ligase (GDP-forming) activity"/>
    <property type="evidence" value="ECO:0007669"/>
    <property type="project" value="RHEA"/>
</dbReference>
<dbReference type="GO" id="GO:0006104">
    <property type="term" value="P:succinyl-CoA metabolic process"/>
    <property type="evidence" value="ECO:0007669"/>
    <property type="project" value="TreeGrafter"/>
</dbReference>
<dbReference type="GO" id="GO:0006099">
    <property type="term" value="P:tricarboxylic acid cycle"/>
    <property type="evidence" value="ECO:0007669"/>
    <property type="project" value="UniProtKB-UniRule"/>
</dbReference>
<dbReference type="FunFam" id="3.30.1490.20:FF:000002">
    <property type="entry name" value="Succinate--CoA ligase [ADP-forming] subunit beta"/>
    <property type="match status" value="1"/>
</dbReference>
<dbReference type="FunFam" id="3.30.470.20:FF:000002">
    <property type="entry name" value="Succinate--CoA ligase [ADP-forming] subunit beta"/>
    <property type="match status" value="1"/>
</dbReference>
<dbReference type="FunFam" id="3.40.50.261:FF:000001">
    <property type="entry name" value="Succinate--CoA ligase [ADP-forming] subunit beta"/>
    <property type="match status" value="1"/>
</dbReference>
<dbReference type="Gene3D" id="3.30.1490.20">
    <property type="entry name" value="ATP-grasp fold, A domain"/>
    <property type="match status" value="1"/>
</dbReference>
<dbReference type="Gene3D" id="3.30.470.20">
    <property type="entry name" value="ATP-grasp fold, B domain"/>
    <property type="match status" value="1"/>
</dbReference>
<dbReference type="Gene3D" id="3.40.50.261">
    <property type="entry name" value="Succinyl-CoA synthetase domains"/>
    <property type="match status" value="1"/>
</dbReference>
<dbReference type="HAMAP" id="MF_00558">
    <property type="entry name" value="Succ_CoA_beta"/>
    <property type="match status" value="1"/>
</dbReference>
<dbReference type="InterPro" id="IPR011761">
    <property type="entry name" value="ATP-grasp"/>
</dbReference>
<dbReference type="InterPro" id="IPR013650">
    <property type="entry name" value="ATP-grasp_succ-CoA_synth-type"/>
</dbReference>
<dbReference type="InterPro" id="IPR013815">
    <property type="entry name" value="ATP_grasp_subdomain_1"/>
</dbReference>
<dbReference type="InterPro" id="IPR017866">
    <property type="entry name" value="Succ-CoA_synthase_bsu_CS"/>
</dbReference>
<dbReference type="InterPro" id="IPR005811">
    <property type="entry name" value="SUCC_ACL_C"/>
</dbReference>
<dbReference type="InterPro" id="IPR005809">
    <property type="entry name" value="Succ_CoA_ligase-like_bsu"/>
</dbReference>
<dbReference type="InterPro" id="IPR016102">
    <property type="entry name" value="Succinyl-CoA_synth-like"/>
</dbReference>
<dbReference type="NCBIfam" id="NF001913">
    <property type="entry name" value="PRK00696.1"/>
    <property type="match status" value="1"/>
</dbReference>
<dbReference type="NCBIfam" id="TIGR01016">
    <property type="entry name" value="sucCoAbeta"/>
    <property type="match status" value="1"/>
</dbReference>
<dbReference type="PANTHER" id="PTHR11815:SF10">
    <property type="entry name" value="SUCCINATE--COA LIGASE [GDP-FORMING] SUBUNIT BETA, MITOCHONDRIAL"/>
    <property type="match status" value="1"/>
</dbReference>
<dbReference type="PANTHER" id="PTHR11815">
    <property type="entry name" value="SUCCINYL-COA SYNTHETASE BETA CHAIN"/>
    <property type="match status" value="1"/>
</dbReference>
<dbReference type="Pfam" id="PF08442">
    <property type="entry name" value="ATP-grasp_2"/>
    <property type="match status" value="1"/>
</dbReference>
<dbReference type="Pfam" id="PF00549">
    <property type="entry name" value="Ligase_CoA"/>
    <property type="match status" value="1"/>
</dbReference>
<dbReference type="PIRSF" id="PIRSF001554">
    <property type="entry name" value="SucCS_beta"/>
    <property type="match status" value="1"/>
</dbReference>
<dbReference type="SUPFAM" id="SSF56059">
    <property type="entry name" value="Glutathione synthetase ATP-binding domain-like"/>
    <property type="match status" value="1"/>
</dbReference>
<dbReference type="SUPFAM" id="SSF52210">
    <property type="entry name" value="Succinyl-CoA synthetase domains"/>
    <property type="match status" value="1"/>
</dbReference>
<dbReference type="PROSITE" id="PS50975">
    <property type="entry name" value="ATP_GRASP"/>
    <property type="match status" value="1"/>
</dbReference>
<dbReference type="PROSITE" id="PS01217">
    <property type="entry name" value="SUCCINYL_COA_LIG_3"/>
    <property type="match status" value="1"/>
</dbReference>